<reference key="1">
    <citation type="journal article" date="2006" name="Proc. Natl. Acad. Sci. U.S.A.">
        <title>Molecular genetic anatomy of inter- and intraserotype variation in the human bacterial pathogen group A Streptococcus.</title>
        <authorList>
            <person name="Beres S.B."/>
            <person name="Richter E.W."/>
            <person name="Nagiec M.J."/>
            <person name="Sumby P."/>
            <person name="Porcella S.F."/>
            <person name="DeLeo F.R."/>
            <person name="Musser J.M."/>
        </authorList>
    </citation>
    <scope>NUCLEOTIDE SEQUENCE [LARGE SCALE GENOMIC DNA]</scope>
    <source>
        <strain>MGAS9429</strain>
    </source>
</reference>
<gene>
    <name evidence="1" type="primary">rpmB</name>
    <name type="ordered locus">MGAS9429_Spy1609</name>
</gene>
<accession>Q1JK27</accession>
<feature type="chain" id="PRO_1000007371" description="Large ribosomal subunit protein bL28">
    <location>
        <begin position="1"/>
        <end position="62"/>
    </location>
</feature>
<comment type="similarity">
    <text evidence="1">Belongs to the bacterial ribosomal protein bL28 family.</text>
</comment>
<organism>
    <name type="scientific">Streptococcus pyogenes serotype M12 (strain MGAS9429)</name>
    <dbReference type="NCBI Taxonomy" id="370551"/>
    <lineage>
        <taxon>Bacteria</taxon>
        <taxon>Bacillati</taxon>
        <taxon>Bacillota</taxon>
        <taxon>Bacilli</taxon>
        <taxon>Lactobacillales</taxon>
        <taxon>Streptococcaceae</taxon>
        <taxon>Streptococcus</taxon>
    </lineage>
</organism>
<proteinExistence type="inferred from homology"/>
<sequence>MAKVCYFTGRKTVSGNNRSHAMNQTKRTVKPNLQKVTILVDGKPKKVWASARALKSGKVERI</sequence>
<dbReference type="EMBL" id="CP000259">
    <property type="protein sequence ID" value="ABF32796.1"/>
    <property type="molecule type" value="Genomic_DNA"/>
</dbReference>
<dbReference type="RefSeq" id="WP_002982870.1">
    <property type="nucleotide sequence ID" value="NC_008021.1"/>
</dbReference>
<dbReference type="SMR" id="Q1JK27"/>
<dbReference type="GeneID" id="83705580"/>
<dbReference type="KEGG" id="spk:MGAS9429_Spy1609"/>
<dbReference type="HOGENOM" id="CLU_064548_7_1_9"/>
<dbReference type="Proteomes" id="UP000002433">
    <property type="component" value="Chromosome"/>
</dbReference>
<dbReference type="GO" id="GO:1990904">
    <property type="term" value="C:ribonucleoprotein complex"/>
    <property type="evidence" value="ECO:0007669"/>
    <property type="project" value="UniProtKB-KW"/>
</dbReference>
<dbReference type="GO" id="GO:0005840">
    <property type="term" value="C:ribosome"/>
    <property type="evidence" value="ECO:0007669"/>
    <property type="project" value="UniProtKB-KW"/>
</dbReference>
<dbReference type="GO" id="GO:0003735">
    <property type="term" value="F:structural constituent of ribosome"/>
    <property type="evidence" value="ECO:0007669"/>
    <property type="project" value="InterPro"/>
</dbReference>
<dbReference type="GO" id="GO:0006412">
    <property type="term" value="P:translation"/>
    <property type="evidence" value="ECO:0007669"/>
    <property type="project" value="UniProtKB-UniRule"/>
</dbReference>
<dbReference type="Gene3D" id="2.30.170.40">
    <property type="entry name" value="Ribosomal protein L28/L24"/>
    <property type="match status" value="1"/>
</dbReference>
<dbReference type="HAMAP" id="MF_00373">
    <property type="entry name" value="Ribosomal_bL28"/>
    <property type="match status" value="1"/>
</dbReference>
<dbReference type="InterPro" id="IPR050096">
    <property type="entry name" value="Bacterial_rp_bL28"/>
</dbReference>
<dbReference type="InterPro" id="IPR026569">
    <property type="entry name" value="Ribosomal_bL28"/>
</dbReference>
<dbReference type="InterPro" id="IPR034704">
    <property type="entry name" value="Ribosomal_bL28/bL31-like_sf"/>
</dbReference>
<dbReference type="InterPro" id="IPR001383">
    <property type="entry name" value="Ribosomal_bL28_bact-type"/>
</dbReference>
<dbReference type="InterPro" id="IPR037147">
    <property type="entry name" value="Ribosomal_bL28_sf"/>
</dbReference>
<dbReference type="NCBIfam" id="TIGR00009">
    <property type="entry name" value="L28"/>
    <property type="match status" value="1"/>
</dbReference>
<dbReference type="PANTHER" id="PTHR39080">
    <property type="entry name" value="50S RIBOSOMAL PROTEIN L28"/>
    <property type="match status" value="1"/>
</dbReference>
<dbReference type="PANTHER" id="PTHR39080:SF1">
    <property type="entry name" value="LARGE RIBOSOMAL SUBUNIT PROTEIN BL28A"/>
    <property type="match status" value="1"/>
</dbReference>
<dbReference type="Pfam" id="PF00830">
    <property type="entry name" value="Ribosomal_L28"/>
    <property type="match status" value="1"/>
</dbReference>
<dbReference type="SUPFAM" id="SSF143800">
    <property type="entry name" value="L28p-like"/>
    <property type="match status" value="1"/>
</dbReference>
<keyword id="KW-0687">Ribonucleoprotein</keyword>
<keyword id="KW-0689">Ribosomal protein</keyword>
<name>RL28_STRPC</name>
<evidence type="ECO:0000255" key="1">
    <source>
        <dbReference type="HAMAP-Rule" id="MF_00373"/>
    </source>
</evidence>
<evidence type="ECO:0000305" key="2"/>
<protein>
    <recommendedName>
        <fullName evidence="1">Large ribosomal subunit protein bL28</fullName>
    </recommendedName>
    <alternativeName>
        <fullName evidence="2">50S ribosomal protein L28</fullName>
    </alternativeName>
</protein>